<dbReference type="EC" id="2.7.7.67" evidence="1"/>
<dbReference type="EMBL" id="CP000743">
    <property type="protein sequence ID" value="ABR56788.1"/>
    <property type="molecule type" value="Genomic_DNA"/>
</dbReference>
<dbReference type="RefSeq" id="WP_011973920.1">
    <property type="nucleotide sequence ID" value="NC_009635.1"/>
</dbReference>
<dbReference type="SMR" id="A6UWB6"/>
<dbReference type="STRING" id="419665.Maeo_1211"/>
<dbReference type="GeneID" id="5326397"/>
<dbReference type="KEGG" id="mae:Maeo_1211"/>
<dbReference type="eggNOG" id="arCOG04106">
    <property type="taxonomic scope" value="Archaea"/>
</dbReference>
<dbReference type="HOGENOM" id="CLU_105710_0_0_2"/>
<dbReference type="OrthoDB" id="45383at2157"/>
<dbReference type="UniPathway" id="UPA00940"/>
<dbReference type="Proteomes" id="UP000001106">
    <property type="component" value="Chromosome"/>
</dbReference>
<dbReference type="GO" id="GO:0005886">
    <property type="term" value="C:plasma membrane"/>
    <property type="evidence" value="ECO:0007669"/>
    <property type="project" value="UniProtKB-SubCell"/>
</dbReference>
<dbReference type="GO" id="GO:0043338">
    <property type="term" value="F:CDP-2,3-bis-(O-geranylgeranyl)-sn-glycerol synthase activity"/>
    <property type="evidence" value="ECO:0007669"/>
    <property type="project" value="UniProtKB-EC"/>
</dbReference>
<dbReference type="GO" id="GO:0046474">
    <property type="term" value="P:glycerophospholipid biosynthetic process"/>
    <property type="evidence" value="ECO:0007669"/>
    <property type="project" value="UniProtKB-UniRule"/>
</dbReference>
<dbReference type="HAMAP" id="MF_01117">
    <property type="entry name" value="CDP_archaeol_synth"/>
    <property type="match status" value="1"/>
</dbReference>
<dbReference type="InterPro" id="IPR032690">
    <property type="entry name" value="CarS"/>
</dbReference>
<dbReference type="InterPro" id="IPR002726">
    <property type="entry name" value="CarS_archaea"/>
</dbReference>
<dbReference type="NCBIfam" id="NF003114">
    <property type="entry name" value="PRK04032.1"/>
    <property type="match status" value="1"/>
</dbReference>
<dbReference type="PANTHER" id="PTHR39650">
    <property type="entry name" value="CDP-ARCHAEOL SYNTHASE"/>
    <property type="match status" value="1"/>
</dbReference>
<dbReference type="PANTHER" id="PTHR39650:SF1">
    <property type="entry name" value="CDP-ARCHAEOL SYNTHASE"/>
    <property type="match status" value="1"/>
</dbReference>
<dbReference type="Pfam" id="PF01864">
    <property type="entry name" value="CarS-like"/>
    <property type="match status" value="1"/>
</dbReference>
<reference key="1">
    <citation type="submission" date="2007-06" db="EMBL/GenBank/DDBJ databases">
        <title>Complete sequence of Methanococcus aeolicus Nankai-3.</title>
        <authorList>
            <consortium name="US DOE Joint Genome Institute"/>
            <person name="Copeland A."/>
            <person name="Lucas S."/>
            <person name="Lapidus A."/>
            <person name="Barry K."/>
            <person name="Glavina del Rio T."/>
            <person name="Dalin E."/>
            <person name="Tice H."/>
            <person name="Pitluck S."/>
            <person name="Chain P."/>
            <person name="Malfatti S."/>
            <person name="Shin M."/>
            <person name="Vergez L."/>
            <person name="Schmutz J."/>
            <person name="Larimer F."/>
            <person name="Land M."/>
            <person name="Hauser L."/>
            <person name="Kyrpides N."/>
            <person name="Lykidis A."/>
            <person name="Sieprawska-Lupa M."/>
            <person name="Whitman W.B."/>
            <person name="Richardson P."/>
        </authorList>
    </citation>
    <scope>NUCLEOTIDE SEQUENCE [LARGE SCALE GENOMIC DNA]</scope>
    <source>
        <strain>ATCC BAA-1280 / DSM 17508 / OCM 812 / Nankai-3</strain>
    </source>
</reference>
<gene>
    <name evidence="1" type="primary">carS</name>
    <name type="ordered locus">Maeo_1211</name>
</gene>
<protein>
    <recommendedName>
        <fullName evidence="1">CDP-archaeol synthase</fullName>
        <ecNumber evidence="1">2.7.7.67</ecNumber>
    </recommendedName>
    <alternativeName>
        <fullName evidence="1">CDP-2,3-bis-(O-geranylgeranyl)-sn-glycerol synthase</fullName>
    </alternativeName>
</protein>
<evidence type="ECO:0000255" key="1">
    <source>
        <dbReference type="HAMAP-Rule" id="MF_01117"/>
    </source>
</evidence>
<comment type="function">
    <text evidence="1">Catalyzes the formation of CDP-2,3-bis-(O-geranylgeranyl)-sn-glycerol (CDP-archaeol) from 2,3-bis-(O-geranylgeranyl)-sn-glycerol 1-phosphate (DGGGP) and CTP. This reaction is the third ether-bond-formation step in the biosynthesis of archaeal membrane lipids.</text>
</comment>
<comment type="catalytic activity">
    <reaction evidence="1">
        <text>2,3-bis-O-(geranylgeranyl)-sn-glycerol 1-phosphate + CTP + H(+) = CDP-2,3-bis-O-(geranylgeranyl)-sn-glycerol + diphosphate</text>
        <dbReference type="Rhea" id="RHEA:25690"/>
        <dbReference type="ChEBI" id="CHEBI:15378"/>
        <dbReference type="ChEBI" id="CHEBI:33019"/>
        <dbReference type="ChEBI" id="CHEBI:37563"/>
        <dbReference type="ChEBI" id="CHEBI:58837"/>
        <dbReference type="ChEBI" id="CHEBI:58838"/>
        <dbReference type="EC" id="2.7.7.67"/>
    </reaction>
</comment>
<comment type="cofactor">
    <cofactor evidence="1">
        <name>Mg(2+)</name>
        <dbReference type="ChEBI" id="CHEBI:18420"/>
    </cofactor>
</comment>
<comment type="pathway">
    <text evidence="1">Membrane lipid metabolism; glycerophospholipid metabolism.</text>
</comment>
<comment type="subcellular location">
    <subcellularLocation>
        <location evidence="1">Cell membrane</location>
        <topology evidence="1">Multi-pass membrane protein</topology>
    </subcellularLocation>
</comment>
<comment type="similarity">
    <text evidence="1">Belongs to the CDP-archaeol synthase family.</text>
</comment>
<name>CDPAS_META3</name>
<feature type="chain" id="PRO_1000065243" description="CDP-archaeol synthase">
    <location>
        <begin position="1"/>
        <end position="178"/>
    </location>
</feature>
<feature type="transmembrane region" description="Helical" evidence="1">
    <location>
        <begin position="3"/>
        <end position="23"/>
    </location>
</feature>
<feature type="transmembrane region" description="Helical" evidence="1">
    <location>
        <begin position="55"/>
        <end position="75"/>
    </location>
</feature>
<feature type="transmembrane region" description="Helical" evidence="1">
    <location>
        <begin position="91"/>
        <end position="111"/>
    </location>
</feature>
<feature type="transmembrane region" description="Helical" evidence="1">
    <location>
        <begin position="125"/>
        <end position="145"/>
    </location>
</feature>
<feature type="transmembrane region" description="Helical" evidence="1">
    <location>
        <begin position="149"/>
        <end position="169"/>
    </location>
</feature>
<accession>A6UWB6</accession>
<organism>
    <name type="scientific">Methanococcus aeolicus (strain ATCC BAA-1280 / DSM 17508 / OCM 812 / Nankai-3)</name>
    <dbReference type="NCBI Taxonomy" id="419665"/>
    <lineage>
        <taxon>Archaea</taxon>
        <taxon>Methanobacteriati</taxon>
        <taxon>Methanobacteriota</taxon>
        <taxon>Methanomada group</taxon>
        <taxon>Methanococci</taxon>
        <taxon>Methanococcales</taxon>
        <taxon>Methanococcaceae</taxon>
        <taxon>Methanococcus</taxon>
    </lineage>
</organism>
<sequence length="178" mass="19357">MSIIYLVINSFIFILPAYVANATPCIFGGGAPIDGGKCFFDGRRIIGNGVSWKGTFFGLFCGTITAILEGIIFNLNIFGTVAFNFNVFEWGIVGLLLSAGALFGDAIGSFIKRRLGLAQGRPAPILDQLGFIVFALLFVYPFAPVSYEMGIFLLVITPMIHLSANIIAYKLGIKDVWW</sequence>
<keyword id="KW-1003">Cell membrane</keyword>
<keyword id="KW-0444">Lipid biosynthesis</keyword>
<keyword id="KW-0443">Lipid metabolism</keyword>
<keyword id="KW-0460">Magnesium</keyword>
<keyword id="KW-0472">Membrane</keyword>
<keyword id="KW-0594">Phospholipid biosynthesis</keyword>
<keyword id="KW-1208">Phospholipid metabolism</keyword>
<keyword id="KW-0808">Transferase</keyword>
<keyword id="KW-0812">Transmembrane</keyword>
<keyword id="KW-1133">Transmembrane helix</keyword>
<proteinExistence type="inferred from homology"/>